<evidence type="ECO:0000255" key="1">
    <source>
        <dbReference type="HAMAP-Rule" id="MF_01324"/>
    </source>
</evidence>
<dbReference type="EC" id="2.7.7.6" evidence="1"/>
<dbReference type="EMBL" id="AB237912">
    <property type="protein sequence ID" value="BAE46637.1"/>
    <property type="molecule type" value="Genomic_DNA"/>
</dbReference>
<dbReference type="RefSeq" id="YP_358662.2">
    <property type="nucleotide sequence ID" value="NC_007500.1"/>
</dbReference>
<dbReference type="SMR" id="Q3C1G9"/>
<dbReference type="GeneID" id="3735092"/>
<dbReference type="KEGG" id="nsy:3735092"/>
<dbReference type="OrthoDB" id="18646at4085"/>
<dbReference type="Proteomes" id="UP000189701">
    <property type="component" value="Chloroplast Pltd"/>
</dbReference>
<dbReference type="GO" id="GO:0009507">
    <property type="term" value="C:chloroplast"/>
    <property type="evidence" value="ECO:0007669"/>
    <property type="project" value="UniProtKB-SubCell"/>
</dbReference>
<dbReference type="GO" id="GO:0000428">
    <property type="term" value="C:DNA-directed RNA polymerase complex"/>
    <property type="evidence" value="ECO:0007669"/>
    <property type="project" value="UniProtKB-KW"/>
</dbReference>
<dbReference type="GO" id="GO:0005739">
    <property type="term" value="C:mitochondrion"/>
    <property type="evidence" value="ECO:0007669"/>
    <property type="project" value="GOC"/>
</dbReference>
<dbReference type="GO" id="GO:0003677">
    <property type="term" value="F:DNA binding"/>
    <property type="evidence" value="ECO:0007669"/>
    <property type="project" value="UniProtKB-UniRule"/>
</dbReference>
<dbReference type="GO" id="GO:0003899">
    <property type="term" value="F:DNA-directed RNA polymerase activity"/>
    <property type="evidence" value="ECO:0007669"/>
    <property type="project" value="UniProtKB-UniRule"/>
</dbReference>
<dbReference type="GO" id="GO:0008270">
    <property type="term" value="F:zinc ion binding"/>
    <property type="evidence" value="ECO:0007669"/>
    <property type="project" value="UniProtKB-UniRule"/>
</dbReference>
<dbReference type="GO" id="GO:0006351">
    <property type="term" value="P:DNA-templated transcription"/>
    <property type="evidence" value="ECO:0007669"/>
    <property type="project" value="UniProtKB-UniRule"/>
</dbReference>
<dbReference type="CDD" id="cd02655">
    <property type="entry name" value="RNAP_beta'_C"/>
    <property type="match status" value="1"/>
</dbReference>
<dbReference type="FunFam" id="1.10.132.30:FF:000002">
    <property type="entry name" value="DNA-directed RNA polymerase subunit beta"/>
    <property type="match status" value="1"/>
</dbReference>
<dbReference type="FunFam" id="1.10.1790.20:FF:000002">
    <property type="entry name" value="DNA-directed RNA polymerase subunit beta"/>
    <property type="match status" value="1"/>
</dbReference>
<dbReference type="Gene3D" id="1.10.132.30">
    <property type="match status" value="1"/>
</dbReference>
<dbReference type="Gene3D" id="1.10.150.390">
    <property type="match status" value="1"/>
</dbReference>
<dbReference type="Gene3D" id="1.10.1790.20">
    <property type="match status" value="1"/>
</dbReference>
<dbReference type="Gene3D" id="1.10.274.100">
    <property type="entry name" value="RNA polymerase Rpb1, domain 3"/>
    <property type="match status" value="1"/>
</dbReference>
<dbReference type="HAMAP" id="MF_01324">
    <property type="entry name" value="RNApol_bact_RpoC2"/>
    <property type="match status" value="1"/>
</dbReference>
<dbReference type="InterPro" id="IPR012756">
    <property type="entry name" value="DNA-dir_RpoC2_beta_pp"/>
</dbReference>
<dbReference type="InterPro" id="IPR050254">
    <property type="entry name" value="RNA_pol_beta''_euk"/>
</dbReference>
<dbReference type="InterPro" id="IPR042102">
    <property type="entry name" value="RNA_pol_Rpb1_3_sf"/>
</dbReference>
<dbReference type="InterPro" id="IPR007083">
    <property type="entry name" value="RNA_pol_Rpb1_4"/>
</dbReference>
<dbReference type="InterPro" id="IPR007081">
    <property type="entry name" value="RNA_pol_Rpb1_5"/>
</dbReference>
<dbReference type="InterPro" id="IPR038120">
    <property type="entry name" value="Rpb1_funnel_sf"/>
</dbReference>
<dbReference type="NCBIfam" id="TIGR02388">
    <property type="entry name" value="rpoC2_cyan"/>
    <property type="match status" value="1"/>
</dbReference>
<dbReference type="PANTHER" id="PTHR34995">
    <property type="entry name" value="DNA-DIRECTED RNA POLYMERASE SUBUNIT BETA"/>
    <property type="match status" value="1"/>
</dbReference>
<dbReference type="PANTHER" id="PTHR34995:SF1">
    <property type="entry name" value="DNA-DIRECTED RNA POLYMERASE SUBUNIT BETA"/>
    <property type="match status" value="1"/>
</dbReference>
<dbReference type="Pfam" id="PF05000">
    <property type="entry name" value="RNA_pol_Rpb1_4"/>
    <property type="match status" value="1"/>
</dbReference>
<dbReference type="Pfam" id="PF04998">
    <property type="entry name" value="RNA_pol_Rpb1_5"/>
    <property type="match status" value="2"/>
</dbReference>
<dbReference type="SUPFAM" id="SSF64484">
    <property type="entry name" value="beta and beta-prime subunits of DNA dependent RNA-polymerase"/>
    <property type="match status" value="1"/>
</dbReference>
<comment type="function">
    <text evidence="1">DNA-dependent RNA polymerase catalyzes the transcription of DNA into RNA using the four ribonucleoside triphosphates as substrates.</text>
</comment>
<comment type="catalytic activity">
    <reaction evidence="1">
        <text>RNA(n) + a ribonucleoside 5'-triphosphate = RNA(n+1) + diphosphate</text>
        <dbReference type="Rhea" id="RHEA:21248"/>
        <dbReference type="Rhea" id="RHEA-COMP:14527"/>
        <dbReference type="Rhea" id="RHEA-COMP:17342"/>
        <dbReference type="ChEBI" id="CHEBI:33019"/>
        <dbReference type="ChEBI" id="CHEBI:61557"/>
        <dbReference type="ChEBI" id="CHEBI:140395"/>
        <dbReference type="EC" id="2.7.7.6"/>
    </reaction>
</comment>
<comment type="cofactor">
    <cofactor evidence="1">
        <name>Zn(2+)</name>
        <dbReference type="ChEBI" id="CHEBI:29105"/>
    </cofactor>
    <text evidence="1">Binds 1 Zn(2+) ion per subunit.</text>
</comment>
<comment type="subunit">
    <text evidence="1">In plastids the minimal PEP RNA polymerase catalytic core is composed of four subunits: alpha, beta, beta', and beta''. When a (nuclear-encoded) sigma factor is associated with the core the holoenzyme is formed, which can initiate transcription.</text>
</comment>
<comment type="subcellular location">
    <subcellularLocation>
        <location evidence="1">Plastid</location>
        <location evidence="1">Chloroplast</location>
    </subcellularLocation>
</comment>
<comment type="similarity">
    <text evidence="1">Belongs to the RNA polymerase beta' chain family. RpoC2 subfamily.</text>
</comment>
<protein>
    <recommendedName>
        <fullName evidence="1">DNA-directed RNA polymerase subunit beta''</fullName>
        <ecNumber evidence="1">2.7.7.6</ecNumber>
    </recommendedName>
    <alternativeName>
        <fullName evidence="1">PEP</fullName>
    </alternativeName>
    <alternativeName>
        <fullName evidence="1">Plastid-encoded RNA polymerase subunit beta''</fullName>
        <shortName evidence="1">RNA polymerase subunit beta''</shortName>
    </alternativeName>
</protein>
<accession>Q3C1G9</accession>
<reference key="1">
    <citation type="journal article" date="2006" name="Mol. Genet. Genomics">
        <title>The chloroplast genome of Nicotiana sylvestris and Nicotiana tomentosiformis: complete sequencing confirms that the Nicotiana sylvestris progenitor is the maternal genome donor of Nicotiana tabacum.</title>
        <authorList>
            <person name="Yukawa M."/>
            <person name="Tsudzuki T."/>
            <person name="Sugiura M."/>
        </authorList>
    </citation>
    <scope>NUCLEOTIDE SEQUENCE [LARGE SCALE GENOMIC DNA]</scope>
</reference>
<name>RPOC2_NICSY</name>
<feature type="chain" id="PRO_0000225334" description="DNA-directed RNA polymerase subunit beta''">
    <location>
        <begin position="1"/>
        <end position="1392"/>
    </location>
</feature>
<feature type="binding site" evidence="1">
    <location>
        <position position="224"/>
    </location>
    <ligand>
        <name>Zn(2+)</name>
        <dbReference type="ChEBI" id="CHEBI:29105"/>
    </ligand>
</feature>
<feature type="binding site" evidence="1">
    <location>
        <position position="295"/>
    </location>
    <ligand>
        <name>Zn(2+)</name>
        <dbReference type="ChEBI" id="CHEBI:29105"/>
    </ligand>
</feature>
<feature type="binding site" evidence="1">
    <location>
        <position position="302"/>
    </location>
    <ligand>
        <name>Zn(2+)</name>
        <dbReference type="ChEBI" id="CHEBI:29105"/>
    </ligand>
</feature>
<feature type="binding site" evidence="1">
    <location>
        <position position="305"/>
    </location>
    <ligand>
        <name>Zn(2+)</name>
        <dbReference type="ChEBI" id="CHEBI:29105"/>
    </ligand>
</feature>
<gene>
    <name evidence="1" type="primary">rpoC2</name>
</gene>
<sequence>MEVLMAERANLVFHNKAINGTAMKRLISRLIDHFGMAYTSHILDQVKTLGFQQATATSISLGIDDLLTIPSKGWLVQDAEQQSLILEKHHHYGNVHAVEKLRQSIEIWYATSEYLRQEMNPNFRMTDPFNPVHIMSFSGARGNASQVHQLVGMRGLMSDPQGQMIDLPIQSNLREGLSLTEYIISCYGARKGVVDTAVRTSDAGYLTRRLVEVVQHIVVRRTDCGTARGISVSPRNGMMPERIFIQTLIGRVLADDIYMGPRCIATRNQDIGIGLVNRFITFRAQPISIRTPFTCRSTSWICRLCYGRSPTHGDLVELGEAVGIIAGQSIGEPGTQLTLRTFHTGGVFTGGTAEHVRAPSNGKIKFNEDLVHPTRTRHGHPAFLCSIDLYVTIESEDILHNVNIPPKSLLLVQNDQYVESEQVIAEIRAGISTLNFKEKVRKHIYSDSDGEMHWSTDVYHAPEFTYGNVHLLPKTSHLWILLGRPCRSSLVYLSIHKDQDQMNAHFLSGKRRYTSNLSVTNDQARQKLFSSDFSGKKEDRIPDYSDLNRIICAGQYNLVYSPILHENSDLLSKRRRNKFIIPLHSIQELENELMPCSGISIEIPVNGIFRRNSILAYFDDPRYRRKSSGIIKYGTVETHSVIKKEDLLEYRGVKEFRPKYQMKVDRFFFIPEEVHILPGSSSIMVRNNSIVGVDTQITLNLRSRVGGLVRVERKKKRIELKIFSGDIHFPGETDKISRHTGVLIPPGTGKRNSKESKKVKNWIYVQRITPSKKKFFVLVRPVVTYEITDGINLATLFPPDPLQERDNVQLRIVNYILYGNGKPIRGISDTSIQLVRTCLVLNWNQDKKSSSCEEARASFVEIRTNGLIRHFLRINLVKSPISYIGKRNDPSGSGLLSDNGSDCTNINPFSSIYSYSKAKIQQSINQPQGTIHTLLNRNKECQSLIILSAANCSRMGPFKDVKYHSVIKKSIKKDPLIPIRNSLGPLGTSLPIENFYSSYHLITHNQILVTNYLQLDNLKQTFQVIKFKYYLMDENGKIFNPDPCRNIILNPFNLNWYFLHHNYCEETSKIISLGQFICENVCIAKNGPPLKSGQVILVQVDSIVIRSAKPYLATPGATVHGHYGETLYEGDTLVTFIYEKSRSGDITQGLPKVEQVLEVRSVDSISMNLEKRIEGWNKCITRILGIPWGFLIGAELTIAQSRISLVNKIQQVYRSQGVQIHNRHLEIIVRQITSKVLVSEDGMSNVFSPGELIGLLRAERMGRALEEAICYRVVLLGITRASLNTQSFISEASFQETARVLAKAALRGRIDWLKGLKENVVLGGVIPVGTGFKGLVHPSKQHNNIPLETKKKNLFEGEMRDILFHHKKLFDSCLSKNFHDIPEQSFIGFNDS</sequence>
<proteinExistence type="inferred from homology"/>
<keyword id="KW-0150">Chloroplast</keyword>
<keyword id="KW-0240">DNA-directed RNA polymerase</keyword>
<keyword id="KW-0479">Metal-binding</keyword>
<keyword id="KW-0548">Nucleotidyltransferase</keyword>
<keyword id="KW-0934">Plastid</keyword>
<keyword id="KW-1185">Reference proteome</keyword>
<keyword id="KW-0804">Transcription</keyword>
<keyword id="KW-0808">Transferase</keyword>
<keyword id="KW-0862">Zinc</keyword>
<geneLocation type="chloroplast"/>
<organism>
    <name type="scientific">Nicotiana sylvestris</name>
    <name type="common">Wood tobacco</name>
    <name type="synonym">South American tobacco</name>
    <dbReference type="NCBI Taxonomy" id="4096"/>
    <lineage>
        <taxon>Eukaryota</taxon>
        <taxon>Viridiplantae</taxon>
        <taxon>Streptophyta</taxon>
        <taxon>Embryophyta</taxon>
        <taxon>Tracheophyta</taxon>
        <taxon>Spermatophyta</taxon>
        <taxon>Magnoliopsida</taxon>
        <taxon>eudicotyledons</taxon>
        <taxon>Gunneridae</taxon>
        <taxon>Pentapetalae</taxon>
        <taxon>asterids</taxon>
        <taxon>lamiids</taxon>
        <taxon>Solanales</taxon>
        <taxon>Solanaceae</taxon>
        <taxon>Nicotianoideae</taxon>
        <taxon>Nicotianeae</taxon>
        <taxon>Nicotiana</taxon>
    </lineage>
</organism>